<reference key="1">
    <citation type="journal article" date="2001" name="J. Bacteriol.">
        <title>Genome sequence and comparative analysis of the solvent-producing bacterium Clostridium acetobutylicum.</title>
        <authorList>
            <person name="Noelling J."/>
            <person name="Breton G."/>
            <person name="Omelchenko M.V."/>
            <person name="Makarova K.S."/>
            <person name="Zeng Q."/>
            <person name="Gibson R."/>
            <person name="Lee H.M."/>
            <person name="Dubois J."/>
            <person name="Qiu D."/>
            <person name="Hitti J."/>
            <person name="Wolf Y.I."/>
            <person name="Tatusov R.L."/>
            <person name="Sabathe F."/>
            <person name="Doucette-Stamm L.A."/>
            <person name="Soucaille P."/>
            <person name="Daly M.J."/>
            <person name="Bennett G.N."/>
            <person name="Koonin E.V."/>
            <person name="Smith D.R."/>
        </authorList>
    </citation>
    <scope>NUCLEOTIDE SEQUENCE [LARGE SCALE GENOMIC DNA]</scope>
    <source>
        <strain>ATCC 824 / DSM 792 / JCM 1419 / IAM 19013 / LMG 5710 / NBRC 13948 / NRRL B-527 / VKM B-1787 / 2291 / W</strain>
    </source>
</reference>
<proteinExistence type="inferred from homology"/>
<comment type="function">
    <text evidence="1">Catalyzes the transfer of the enolpyruvyl moiety of phosphoenolpyruvate (PEP) to the 5-hydroxyl of shikimate-3-phosphate (S3P) to produce enolpyruvyl shikimate-3-phosphate and inorganic phosphate.</text>
</comment>
<comment type="catalytic activity">
    <reaction evidence="1">
        <text>3-phosphoshikimate + phosphoenolpyruvate = 5-O-(1-carboxyvinyl)-3-phosphoshikimate + phosphate</text>
        <dbReference type="Rhea" id="RHEA:21256"/>
        <dbReference type="ChEBI" id="CHEBI:43474"/>
        <dbReference type="ChEBI" id="CHEBI:57701"/>
        <dbReference type="ChEBI" id="CHEBI:58702"/>
        <dbReference type="ChEBI" id="CHEBI:145989"/>
        <dbReference type="EC" id="2.5.1.19"/>
    </reaction>
    <physiologicalReaction direction="left-to-right" evidence="1">
        <dbReference type="Rhea" id="RHEA:21257"/>
    </physiologicalReaction>
</comment>
<comment type="pathway">
    <text evidence="1">Metabolic intermediate biosynthesis; chorismate biosynthesis; chorismate from D-erythrose 4-phosphate and phosphoenolpyruvate: step 6/7.</text>
</comment>
<comment type="subunit">
    <text evidence="1">Monomer.</text>
</comment>
<comment type="subcellular location">
    <subcellularLocation>
        <location evidence="1">Cytoplasm</location>
    </subcellularLocation>
</comment>
<comment type="similarity">
    <text evidence="1">Belongs to the EPSP synthase family.</text>
</comment>
<evidence type="ECO:0000255" key="1">
    <source>
        <dbReference type="HAMAP-Rule" id="MF_00210"/>
    </source>
</evidence>
<keyword id="KW-0028">Amino-acid biosynthesis</keyword>
<keyword id="KW-0057">Aromatic amino acid biosynthesis</keyword>
<keyword id="KW-0963">Cytoplasm</keyword>
<keyword id="KW-1185">Reference proteome</keyword>
<keyword id="KW-0808">Transferase</keyword>
<protein>
    <recommendedName>
        <fullName evidence="1">3-phosphoshikimate 1-carboxyvinyltransferase</fullName>
        <ecNumber evidence="1">2.5.1.19</ecNumber>
    </recommendedName>
    <alternativeName>
        <fullName evidence="1">5-enolpyruvylshikimate-3-phosphate synthase</fullName>
        <shortName evidence="1">EPSP synthase</shortName>
        <shortName evidence="1">EPSPS</shortName>
    </alternativeName>
</protein>
<name>AROA_CLOAB</name>
<accession>Q97KM2</accession>
<organism>
    <name type="scientific">Clostridium acetobutylicum (strain ATCC 824 / DSM 792 / JCM 1419 / IAM 19013 / LMG 5710 / NBRC 13948 / NRRL B-527 / VKM B-1787 / 2291 / W)</name>
    <dbReference type="NCBI Taxonomy" id="272562"/>
    <lineage>
        <taxon>Bacteria</taxon>
        <taxon>Bacillati</taxon>
        <taxon>Bacillota</taxon>
        <taxon>Clostridia</taxon>
        <taxon>Eubacteriales</taxon>
        <taxon>Clostridiaceae</taxon>
        <taxon>Clostridium</taxon>
    </lineage>
</organism>
<gene>
    <name evidence="1" type="primary">aroA</name>
    <name type="ordered locus">CA_C0895</name>
</gene>
<sequence length="428" mass="46960">MNCVKINPCCLKGDIKIPPSKSLGHRAIICAALSEEESTIENISYSKDIKATCIGMSKLGALIIEDAKDNSTLKIKKQKLVSKEKVYIDCSESGSTVRFLIPISLIEERNVVFDGQGKLSYRPLDSYFNIFDEKEIAYSHPEGKVLPLQIKGRLKAGMFNLPGNISSQFISGLMFSLPFLEGDSIINITTNLESVGYVDMTIDMLKKFGIEIENKAYKSFFIKGNQKCKGTKYKVEGDFSQAAFWLSAGILNGNINCKDLNISSLQGDKVILDILKKMGGAIDEKSFSSKKSHTHGIVIDASQCPDLVPILSVVAALSEGTTKIVNAARLRIKESDRLKAMATELNKLGAEVVELEDGLLIEGKEKLKGGEVESWNDHRIAMALGIAALRCEESVTINGSECVSKSYPQFWSDLKQLGGDVHEWSLGE</sequence>
<dbReference type="EC" id="2.5.1.19" evidence="1"/>
<dbReference type="EMBL" id="AE001437">
    <property type="protein sequence ID" value="AAK78871.1"/>
    <property type="molecule type" value="Genomic_DNA"/>
</dbReference>
<dbReference type="PIR" id="D97010">
    <property type="entry name" value="D97010"/>
</dbReference>
<dbReference type="RefSeq" id="NP_347531.1">
    <property type="nucleotide sequence ID" value="NC_003030.1"/>
</dbReference>
<dbReference type="RefSeq" id="WP_010964213.1">
    <property type="nucleotide sequence ID" value="NC_003030.1"/>
</dbReference>
<dbReference type="SMR" id="Q97KM2"/>
<dbReference type="STRING" id="272562.CA_C0895"/>
<dbReference type="GeneID" id="44997405"/>
<dbReference type="KEGG" id="cac:CA_C0895"/>
<dbReference type="PATRIC" id="fig|272562.8.peg.1104"/>
<dbReference type="eggNOG" id="COG0128">
    <property type="taxonomic scope" value="Bacteria"/>
</dbReference>
<dbReference type="HOGENOM" id="CLU_024321_0_0_9"/>
<dbReference type="OrthoDB" id="9809920at2"/>
<dbReference type="UniPathway" id="UPA00053">
    <property type="reaction ID" value="UER00089"/>
</dbReference>
<dbReference type="Proteomes" id="UP000000814">
    <property type="component" value="Chromosome"/>
</dbReference>
<dbReference type="GO" id="GO:0005737">
    <property type="term" value="C:cytoplasm"/>
    <property type="evidence" value="ECO:0007669"/>
    <property type="project" value="UniProtKB-SubCell"/>
</dbReference>
<dbReference type="GO" id="GO:0003866">
    <property type="term" value="F:3-phosphoshikimate 1-carboxyvinyltransferase activity"/>
    <property type="evidence" value="ECO:0007669"/>
    <property type="project" value="UniProtKB-UniRule"/>
</dbReference>
<dbReference type="GO" id="GO:0008652">
    <property type="term" value="P:amino acid biosynthetic process"/>
    <property type="evidence" value="ECO:0007669"/>
    <property type="project" value="UniProtKB-KW"/>
</dbReference>
<dbReference type="GO" id="GO:0009073">
    <property type="term" value="P:aromatic amino acid family biosynthetic process"/>
    <property type="evidence" value="ECO:0007669"/>
    <property type="project" value="UniProtKB-KW"/>
</dbReference>
<dbReference type="GO" id="GO:0009423">
    <property type="term" value="P:chorismate biosynthetic process"/>
    <property type="evidence" value="ECO:0007669"/>
    <property type="project" value="UniProtKB-UniRule"/>
</dbReference>
<dbReference type="CDD" id="cd01556">
    <property type="entry name" value="EPSP_synthase"/>
    <property type="match status" value="1"/>
</dbReference>
<dbReference type="Gene3D" id="3.65.10.10">
    <property type="entry name" value="Enolpyruvate transferase domain"/>
    <property type="match status" value="2"/>
</dbReference>
<dbReference type="HAMAP" id="MF_00210">
    <property type="entry name" value="EPSP_synth"/>
    <property type="match status" value="1"/>
</dbReference>
<dbReference type="InterPro" id="IPR001986">
    <property type="entry name" value="Enolpyruvate_Tfrase_dom"/>
</dbReference>
<dbReference type="InterPro" id="IPR036968">
    <property type="entry name" value="Enolpyruvate_Tfrase_sf"/>
</dbReference>
<dbReference type="InterPro" id="IPR006264">
    <property type="entry name" value="EPSP_synthase"/>
</dbReference>
<dbReference type="InterPro" id="IPR023193">
    <property type="entry name" value="EPSP_synthase_CS"/>
</dbReference>
<dbReference type="InterPro" id="IPR013792">
    <property type="entry name" value="RNA3'P_cycl/enolpyr_Trfase_a/b"/>
</dbReference>
<dbReference type="NCBIfam" id="TIGR01356">
    <property type="entry name" value="aroA"/>
    <property type="match status" value="1"/>
</dbReference>
<dbReference type="PANTHER" id="PTHR21090">
    <property type="entry name" value="AROM/DEHYDROQUINATE SYNTHASE"/>
    <property type="match status" value="1"/>
</dbReference>
<dbReference type="PANTHER" id="PTHR21090:SF5">
    <property type="entry name" value="PENTAFUNCTIONAL AROM POLYPEPTIDE"/>
    <property type="match status" value="1"/>
</dbReference>
<dbReference type="Pfam" id="PF00275">
    <property type="entry name" value="EPSP_synthase"/>
    <property type="match status" value="1"/>
</dbReference>
<dbReference type="PIRSF" id="PIRSF000505">
    <property type="entry name" value="EPSPS"/>
    <property type="match status" value="1"/>
</dbReference>
<dbReference type="SUPFAM" id="SSF55205">
    <property type="entry name" value="EPT/RTPC-like"/>
    <property type="match status" value="1"/>
</dbReference>
<dbReference type="PROSITE" id="PS00885">
    <property type="entry name" value="EPSP_SYNTHASE_2"/>
    <property type="match status" value="1"/>
</dbReference>
<feature type="chain" id="PRO_0000088247" description="3-phosphoshikimate 1-carboxyvinyltransferase">
    <location>
        <begin position="1"/>
        <end position="428"/>
    </location>
</feature>
<feature type="active site" description="Proton acceptor" evidence="1">
    <location>
        <position position="306"/>
    </location>
</feature>
<feature type="binding site" evidence="1">
    <location>
        <position position="21"/>
    </location>
    <ligand>
        <name>3-phosphoshikimate</name>
        <dbReference type="ChEBI" id="CHEBI:145989"/>
    </ligand>
</feature>
<feature type="binding site" evidence="1">
    <location>
        <position position="21"/>
    </location>
    <ligand>
        <name>phosphoenolpyruvate</name>
        <dbReference type="ChEBI" id="CHEBI:58702"/>
    </ligand>
</feature>
<feature type="binding site" evidence="1">
    <location>
        <position position="22"/>
    </location>
    <ligand>
        <name>3-phosphoshikimate</name>
        <dbReference type="ChEBI" id="CHEBI:145989"/>
    </ligand>
</feature>
<feature type="binding site" evidence="1">
    <location>
        <position position="26"/>
    </location>
    <ligand>
        <name>3-phosphoshikimate</name>
        <dbReference type="ChEBI" id="CHEBI:145989"/>
    </ligand>
</feature>
<feature type="binding site" evidence="1">
    <location>
        <position position="94"/>
    </location>
    <ligand>
        <name>phosphoenolpyruvate</name>
        <dbReference type="ChEBI" id="CHEBI:58702"/>
    </ligand>
</feature>
<feature type="binding site" evidence="1">
    <location>
        <position position="122"/>
    </location>
    <ligand>
        <name>phosphoenolpyruvate</name>
        <dbReference type="ChEBI" id="CHEBI:58702"/>
    </ligand>
</feature>
<feature type="binding site" evidence="1">
    <location>
        <position position="166"/>
    </location>
    <ligand>
        <name>3-phosphoshikimate</name>
        <dbReference type="ChEBI" id="CHEBI:145989"/>
    </ligand>
</feature>
<feature type="binding site" evidence="1">
    <location>
        <position position="167"/>
    </location>
    <ligand>
        <name>3-phosphoshikimate</name>
        <dbReference type="ChEBI" id="CHEBI:145989"/>
    </ligand>
</feature>
<feature type="binding site" evidence="1">
    <location>
        <position position="168"/>
    </location>
    <ligand>
        <name>3-phosphoshikimate</name>
        <dbReference type="ChEBI" id="CHEBI:145989"/>
    </ligand>
</feature>
<feature type="binding site" evidence="1">
    <location>
        <position position="168"/>
    </location>
    <ligand>
        <name>phosphoenolpyruvate</name>
        <dbReference type="ChEBI" id="CHEBI:58702"/>
    </ligand>
</feature>
<feature type="binding site" evidence="1">
    <location>
        <position position="194"/>
    </location>
    <ligand>
        <name>3-phosphoshikimate</name>
        <dbReference type="ChEBI" id="CHEBI:145989"/>
    </ligand>
</feature>
<feature type="binding site" evidence="1">
    <location>
        <position position="306"/>
    </location>
    <ligand>
        <name>3-phosphoshikimate</name>
        <dbReference type="ChEBI" id="CHEBI:145989"/>
    </ligand>
</feature>
<feature type="binding site" evidence="1">
    <location>
        <position position="333"/>
    </location>
    <ligand>
        <name>3-phosphoshikimate</name>
        <dbReference type="ChEBI" id="CHEBI:145989"/>
    </ligand>
</feature>
<feature type="binding site" evidence="1">
    <location>
        <position position="337"/>
    </location>
    <ligand>
        <name>phosphoenolpyruvate</name>
        <dbReference type="ChEBI" id="CHEBI:58702"/>
    </ligand>
</feature>
<feature type="binding site" evidence="1">
    <location>
        <position position="379"/>
    </location>
    <ligand>
        <name>phosphoenolpyruvate</name>
        <dbReference type="ChEBI" id="CHEBI:58702"/>
    </ligand>
</feature>
<feature type="binding site" evidence="1">
    <location>
        <position position="405"/>
    </location>
    <ligand>
        <name>phosphoenolpyruvate</name>
        <dbReference type="ChEBI" id="CHEBI:58702"/>
    </ligand>
</feature>